<gene>
    <name evidence="1" type="primary">rimP</name>
    <name type="ordered locus">Meso_3927</name>
</gene>
<accession>Q11BD1</accession>
<protein>
    <recommendedName>
        <fullName evidence="1">Ribosome maturation factor RimP</fullName>
    </recommendedName>
</protein>
<evidence type="ECO:0000255" key="1">
    <source>
        <dbReference type="HAMAP-Rule" id="MF_01077"/>
    </source>
</evidence>
<evidence type="ECO:0000256" key="2">
    <source>
        <dbReference type="SAM" id="MobiDB-lite"/>
    </source>
</evidence>
<keyword id="KW-0963">Cytoplasm</keyword>
<keyword id="KW-0690">Ribosome biogenesis</keyword>
<comment type="function">
    <text evidence="1">Required for maturation of 30S ribosomal subunits.</text>
</comment>
<comment type="subcellular location">
    <subcellularLocation>
        <location evidence="1">Cytoplasm</location>
    </subcellularLocation>
</comment>
<comment type="similarity">
    <text evidence="1">Belongs to the RimP family.</text>
</comment>
<dbReference type="EMBL" id="CP000390">
    <property type="protein sequence ID" value="ABG65294.1"/>
    <property type="molecule type" value="Genomic_DNA"/>
</dbReference>
<dbReference type="SMR" id="Q11BD1"/>
<dbReference type="STRING" id="266779.Meso_3927"/>
<dbReference type="KEGG" id="mes:Meso_3927"/>
<dbReference type="eggNOG" id="COG0779">
    <property type="taxonomic scope" value="Bacteria"/>
</dbReference>
<dbReference type="HOGENOM" id="CLU_070525_0_1_5"/>
<dbReference type="OrthoDB" id="9805006at2"/>
<dbReference type="GO" id="GO:0005829">
    <property type="term" value="C:cytosol"/>
    <property type="evidence" value="ECO:0007669"/>
    <property type="project" value="TreeGrafter"/>
</dbReference>
<dbReference type="GO" id="GO:0000028">
    <property type="term" value="P:ribosomal small subunit assembly"/>
    <property type="evidence" value="ECO:0007669"/>
    <property type="project" value="TreeGrafter"/>
</dbReference>
<dbReference type="GO" id="GO:0006412">
    <property type="term" value="P:translation"/>
    <property type="evidence" value="ECO:0007669"/>
    <property type="project" value="TreeGrafter"/>
</dbReference>
<dbReference type="CDD" id="cd01734">
    <property type="entry name" value="YlxS_C"/>
    <property type="match status" value="1"/>
</dbReference>
<dbReference type="Gene3D" id="2.30.30.180">
    <property type="entry name" value="Ribosome maturation factor RimP, C-terminal domain"/>
    <property type="match status" value="1"/>
</dbReference>
<dbReference type="Gene3D" id="3.30.300.70">
    <property type="entry name" value="RimP-like superfamily, N-terminal"/>
    <property type="match status" value="1"/>
</dbReference>
<dbReference type="HAMAP" id="MF_01077">
    <property type="entry name" value="RimP"/>
    <property type="match status" value="1"/>
</dbReference>
<dbReference type="InterPro" id="IPR003728">
    <property type="entry name" value="Ribosome_maturation_RimP"/>
</dbReference>
<dbReference type="InterPro" id="IPR028998">
    <property type="entry name" value="RimP_C"/>
</dbReference>
<dbReference type="InterPro" id="IPR036847">
    <property type="entry name" value="RimP_C_sf"/>
</dbReference>
<dbReference type="InterPro" id="IPR028989">
    <property type="entry name" value="RimP_N"/>
</dbReference>
<dbReference type="InterPro" id="IPR035956">
    <property type="entry name" value="RimP_N_sf"/>
</dbReference>
<dbReference type="NCBIfam" id="NF000932">
    <property type="entry name" value="PRK00092.2-5"/>
    <property type="match status" value="1"/>
</dbReference>
<dbReference type="PANTHER" id="PTHR33867">
    <property type="entry name" value="RIBOSOME MATURATION FACTOR RIMP"/>
    <property type="match status" value="1"/>
</dbReference>
<dbReference type="PANTHER" id="PTHR33867:SF1">
    <property type="entry name" value="RIBOSOME MATURATION FACTOR RIMP"/>
    <property type="match status" value="1"/>
</dbReference>
<dbReference type="Pfam" id="PF17384">
    <property type="entry name" value="DUF150_C"/>
    <property type="match status" value="1"/>
</dbReference>
<dbReference type="Pfam" id="PF02576">
    <property type="entry name" value="RimP_N"/>
    <property type="match status" value="1"/>
</dbReference>
<dbReference type="SUPFAM" id="SSF74942">
    <property type="entry name" value="YhbC-like, C-terminal domain"/>
    <property type="match status" value="1"/>
</dbReference>
<dbReference type="SUPFAM" id="SSF75420">
    <property type="entry name" value="YhbC-like, N-terminal domain"/>
    <property type="match status" value="1"/>
</dbReference>
<name>RIMP_CHESB</name>
<reference key="1">
    <citation type="submission" date="2006-06" db="EMBL/GenBank/DDBJ databases">
        <title>Complete sequence of chromosome of Mesorhizobium sp. BNC1.</title>
        <authorList>
            <consortium name="US DOE Joint Genome Institute"/>
            <person name="Copeland A."/>
            <person name="Lucas S."/>
            <person name="Lapidus A."/>
            <person name="Barry K."/>
            <person name="Detter J.C."/>
            <person name="Glavina del Rio T."/>
            <person name="Hammon N."/>
            <person name="Israni S."/>
            <person name="Dalin E."/>
            <person name="Tice H."/>
            <person name="Pitluck S."/>
            <person name="Chertkov O."/>
            <person name="Brettin T."/>
            <person name="Bruce D."/>
            <person name="Han C."/>
            <person name="Tapia R."/>
            <person name="Gilna P."/>
            <person name="Schmutz J."/>
            <person name="Larimer F."/>
            <person name="Land M."/>
            <person name="Hauser L."/>
            <person name="Kyrpides N."/>
            <person name="Mikhailova N."/>
            <person name="Richardson P."/>
        </authorList>
    </citation>
    <scope>NUCLEOTIDE SEQUENCE [LARGE SCALE GENOMIC DNA]</scope>
    <source>
        <strain>BNC1</strain>
    </source>
</reference>
<sequence length="220" mass="23818">MQDDRIIRETGAAARVAAIVMPVLDALGYRLVRVRLSAQDGLTLQIMAERPDGTMTVDDCEEVSRAVSPALDVEDPIDSAYQLEISSPGIDRPLVRLSDFQAALGHLAKVETSVMVDGRKRFRGQIVGCTGETLTIERDKVAEGEAPLAEIPLDAISDAKLVLTDALIREALKKDKEERRQRKKARRRGEKGGVGDDGTAGEEQPDSAREGPARSASEGE</sequence>
<feature type="chain" id="PRO_0000384700" description="Ribosome maturation factor RimP">
    <location>
        <begin position="1"/>
        <end position="220"/>
    </location>
</feature>
<feature type="region of interest" description="Disordered" evidence="2">
    <location>
        <begin position="173"/>
        <end position="220"/>
    </location>
</feature>
<organism>
    <name type="scientific">Chelativorans sp. (strain BNC1)</name>
    <dbReference type="NCBI Taxonomy" id="266779"/>
    <lineage>
        <taxon>Bacteria</taxon>
        <taxon>Pseudomonadati</taxon>
        <taxon>Pseudomonadota</taxon>
        <taxon>Alphaproteobacteria</taxon>
        <taxon>Hyphomicrobiales</taxon>
        <taxon>Phyllobacteriaceae</taxon>
        <taxon>Chelativorans</taxon>
    </lineage>
</organism>
<proteinExistence type="inferred from homology"/>